<organism>
    <name type="scientific">Deinococcus geothermalis (strain DSM 11300 / CIP 105573 / AG-3a)</name>
    <dbReference type="NCBI Taxonomy" id="319795"/>
    <lineage>
        <taxon>Bacteria</taxon>
        <taxon>Thermotogati</taxon>
        <taxon>Deinococcota</taxon>
        <taxon>Deinococci</taxon>
        <taxon>Deinococcales</taxon>
        <taxon>Deinococcaceae</taxon>
        <taxon>Deinococcus</taxon>
    </lineage>
</organism>
<keyword id="KW-0414">Isoprene biosynthesis</keyword>
<keyword id="KW-0548">Nucleotidyltransferase</keyword>
<keyword id="KW-0808">Transferase</keyword>
<gene>
    <name evidence="1" type="primary">ispD</name>
    <name type="ordered locus">Dgeo_0181</name>
</gene>
<dbReference type="EC" id="2.7.7.60" evidence="1"/>
<dbReference type="EMBL" id="CP000359">
    <property type="protein sequence ID" value="ABF44484.1"/>
    <property type="molecule type" value="Genomic_DNA"/>
</dbReference>
<dbReference type="RefSeq" id="WP_011529331.1">
    <property type="nucleotide sequence ID" value="NC_008025.1"/>
</dbReference>
<dbReference type="SMR" id="Q1J200"/>
<dbReference type="STRING" id="319795.Dgeo_0181"/>
<dbReference type="KEGG" id="dge:Dgeo_0181"/>
<dbReference type="eggNOG" id="COG1211">
    <property type="taxonomic scope" value="Bacteria"/>
</dbReference>
<dbReference type="HOGENOM" id="CLU_061281_2_2_0"/>
<dbReference type="UniPathway" id="UPA00056">
    <property type="reaction ID" value="UER00093"/>
</dbReference>
<dbReference type="Proteomes" id="UP000002431">
    <property type="component" value="Chromosome"/>
</dbReference>
<dbReference type="GO" id="GO:0050518">
    <property type="term" value="F:2-C-methyl-D-erythritol 4-phosphate cytidylyltransferase activity"/>
    <property type="evidence" value="ECO:0007669"/>
    <property type="project" value="UniProtKB-UniRule"/>
</dbReference>
<dbReference type="GO" id="GO:0019288">
    <property type="term" value="P:isopentenyl diphosphate biosynthetic process, methylerythritol 4-phosphate pathway"/>
    <property type="evidence" value="ECO:0007669"/>
    <property type="project" value="UniProtKB-UniRule"/>
</dbReference>
<dbReference type="CDD" id="cd02516">
    <property type="entry name" value="CDP-ME_synthetase"/>
    <property type="match status" value="1"/>
</dbReference>
<dbReference type="Gene3D" id="3.90.550.10">
    <property type="entry name" value="Spore Coat Polysaccharide Biosynthesis Protein SpsA, Chain A"/>
    <property type="match status" value="1"/>
</dbReference>
<dbReference type="HAMAP" id="MF_00108">
    <property type="entry name" value="IspD"/>
    <property type="match status" value="1"/>
</dbReference>
<dbReference type="InterPro" id="IPR001228">
    <property type="entry name" value="IspD"/>
</dbReference>
<dbReference type="InterPro" id="IPR034683">
    <property type="entry name" value="IspD/TarI"/>
</dbReference>
<dbReference type="InterPro" id="IPR050088">
    <property type="entry name" value="IspD/TarI_cytidylyltransf_bact"/>
</dbReference>
<dbReference type="InterPro" id="IPR018294">
    <property type="entry name" value="ISPD_synthase_CS"/>
</dbReference>
<dbReference type="InterPro" id="IPR029044">
    <property type="entry name" value="Nucleotide-diphossugar_trans"/>
</dbReference>
<dbReference type="NCBIfam" id="TIGR00453">
    <property type="entry name" value="ispD"/>
    <property type="match status" value="1"/>
</dbReference>
<dbReference type="PANTHER" id="PTHR32125">
    <property type="entry name" value="2-C-METHYL-D-ERYTHRITOL 4-PHOSPHATE CYTIDYLYLTRANSFERASE, CHLOROPLASTIC"/>
    <property type="match status" value="1"/>
</dbReference>
<dbReference type="PANTHER" id="PTHR32125:SF4">
    <property type="entry name" value="2-C-METHYL-D-ERYTHRITOL 4-PHOSPHATE CYTIDYLYLTRANSFERASE, CHLOROPLASTIC"/>
    <property type="match status" value="1"/>
</dbReference>
<dbReference type="Pfam" id="PF01128">
    <property type="entry name" value="IspD"/>
    <property type="match status" value="1"/>
</dbReference>
<dbReference type="SUPFAM" id="SSF53448">
    <property type="entry name" value="Nucleotide-diphospho-sugar transferases"/>
    <property type="match status" value="1"/>
</dbReference>
<dbReference type="PROSITE" id="PS01295">
    <property type="entry name" value="ISPD"/>
    <property type="match status" value="1"/>
</dbReference>
<protein>
    <recommendedName>
        <fullName evidence="1">2-C-methyl-D-erythritol 4-phosphate cytidylyltransferase</fullName>
        <ecNumber evidence="1">2.7.7.60</ecNumber>
    </recommendedName>
    <alternativeName>
        <fullName evidence="1">4-diphosphocytidyl-2C-methyl-D-erythritol synthase</fullName>
    </alternativeName>
    <alternativeName>
        <fullName evidence="1">MEP cytidylyltransferase</fullName>
        <shortName evidence="1">MCT</shortName>
    </alternativeName>
</protein>
<reference key="1">
    <citation type="submission" date="2006-04" db="EMBL/GenBank/DDBJ databases">
        <title>Complete sequence of chromosome of Deinococcus geothermalis DSM 11300.</title>
        <authorList>
            <person name="Copeland A."/>
            <person name="Lucas S."/>
            <person name="Lapidus A."/>
            <person name="Barry K."/>
            <person name="Detter J.C."/>
            <person name="Glavina del Rio T."/>
            <person name="Hammon N."/>
            <person name="Israni S."/>
            <person name="Dalin E."/>
            <person name="Tice H."/>
            <person name="Pitluck S."/>
            <person name="Brettin T."/>
            <person name="Bruce D."/>
            <person name="Han C."/>
            <person name="Tapia R."/>
            <person name="Saunders E."/>
            <person name="Gilna P."/>
            <person name="Schmutz J."/>
            <person name="Larimer F."/>
            <person name="Land M."/>
            <person name="Hauser L."/>
            <person name="Kyrpides N."/>
            <person name="Kim E."/>
            <person name="Daly M.J."/>
            <person name="Fredrickson J.K."/>
            <person name="Makarova K.S."/>
            <person name="Gaidamakova E.K."/>
            <person name="Zhai M."/>
            <person name="Richardson P."/>
        </authorList>
    </citation>
    <scope>NUCLEOTIDE SEQUENCE [LARGE SCALE GENOMIC DNA]</scope>
    <source>
        <strain>DSM 11300 / CIP 105573 / AG-3a</strain>
    </source>
</reference>
<comment type="function">
    <text evidence="1">Catalyzes the formation of 4-diphosphocytidyl-2-C-methyl-D-erythritol from CTP and 2-C-methyl-D-erythritol 4-phosphate (MEP).</text>
</comment>
<comment type="catalytic activity">
    <reaction evidence="1">
        <text>2-C-methyl-D-erythritol 4-phosphate + CTP + H(+) = 4-CDP-2-C-methyl-D-erythritol + diphosphate</text>
        <dbReference type="Rhea" id="RHEA:13429"/>
        <dbReference type="ChEBI" id="CHEBI:15378"/>
        <dbReference type="ChEBI" id="CHEBI:33019"/>
        <dbReference type="ChEBI" id="CHEBI:37563"/>
        <dbReference type="ChEBI" id="CHEBI:57823"/>
        <dbReference type="ChEBI" id="CHEBI:58262"/>
        <dbReference type="EC" id="2.7.7.60"/>
    </reaction>
</comment>
<comment type="pathway">
    <text evidence="1">Isoprenoid biosynthesis; isopentenyl diphosphate biosynthesis via DXP pathway; isopentenyl diphosphate from 1-deoxy-D-xylulose 5-phosphate: step 2/6.</text>
</comment>
<comment type="similarity">
    <text evidence="1">Belongs to the IspD/TarI cytidylyltransferase family. IspD subfamily.</text>
</comment>
<proteinExistence type="inferred from homology"/>
<accession>Q1J200</accession>
<name>ISPD_DEIGD</name>
<feature type="chain" id="PRO_1000022921" description="2-C-methyl-D-erythritol 4-phosphate cytidylyltransferase">
    <location>
        <begin position="1"/>
        <end position="227"/>
    </location>
</feature>
<feature type="site" description="Transition state stabilizer" evidence="1">
    <location>
        <position position="23"/>
    </location>
</feature>
<feature type="site" description="Transition state stabilizer" evidence="1">
    <location>
        <position position="29"/>
    </location>
</feature>
<feature type="site" description="Positions MEP for the nucleophilic attack" evidence="1">
    <location>
        <position position="147"/>
    </location>
</feature>
<feature type="site" description="Positions MEP for the nucleophilic attack" evidence="1">
    <location>
        <position position="203"/>
    </location>
</feature>
<sequence length="227" mass="23379">MTSVCFLAGRTAALIPAAGSGTRLGRGPKAFVEVAGQSLLARSVAALAPWVDEVLVALPEGFPLPPGLPAQAILGGTTRQESVWRLLHATTADVVLVHDAARPFLPGAVVTALLEAVSETGAATAALPVADTLVRGERGRWADLVPREGLWAVQTPQAFRRALLLRAHAAARAEGFGATDDAGLIARLGLPVRLVPGDARLFKVTTPGDLALAQAVAAVWDATCDAP</sequence>
<evidence type="ECO:0000255" key="1">
    <source>
        <dbReference type="HAMAP-Rule" id="MF_00108"/>
    </source>
</evidence>